<reference key="1">
    <citation type="journal article" date="1986" name="Proc. Natl. Acad. Sci. U.S.A.">
        <title>Cloning and sequencing of the pertussis toxin genes: operon structure and gene duplication.</title>
        <authorList>
            <person name="Nicosia A."/>
            <person name="Perugini M."/>
            <person name="Franzini C."/>
            <person name="Casagli M.C."/>
            <person name="Borri M.G."/>
            <person name="Antoni G."/>
            <person name="Almoni M."/>
            <person name="Neri P."/>
            <person name="Ratti G."/>
            <person name="Rappuoli R."/>
        </authorList>
    </citation>
    <scope>NUCLEOTIDE SEQUENCE [GENOMIC DNA]</scope>
    <source>
        <strain>BP165</strain>
    </source>
</reference>
<reference key="2">
    <citation type="journal article" date="1993" name="Proc. Natl. Acad. Sci. U.S.A.">
        <title>Molecular characterization of an operon required for pertussis toxin secretion.</title>
        <authorList>
            <person name="Weiss A.A."/>
            <person name="Johnson F.D."/>
            <person name="Burns D.L."/>
        </authorList>
    </citation>
    <scope>NUCLEOTIDE SEQUENCE [GENOMIC DNA]</scope>
    <scope>FUNCTION</scope>
    <source>
        <strain>Tohama I / BP338</strain>
    </source>
</reference>
<reference key="3">
    <citation type="journal article" date="2003" name="Nat. Genet.">
        <title>Comparative analysis of the genome sequences of Bordetella pertussis, Bordetella parapertussis and Bordetella bronchiseptica.</title>
        <authorList>
            <person name="Parkhill J."/>
            <person name="Sebaihia M."/>
            <person name="Preston A."/>
            <person name="Murphy L.D."/>
            <person name="Thomson N.R."/>
            <person name="Harris D.E."/>
            <person name="Holden M.T.G."/>
            <person name="Churcher C.M."/>
            <person name="Bentley S.D."/>
            <person name="Mungall K.L."/>
            <person name="Cerdeno-Tarraga A.-M."/>
            <person name="Temple L."/>
            <person name="James K.D."/>
            <person name="Harris B."/>
            <person name="Quail M.A."/>
            <person name="Achtman M."/>
            <person name="Atkin R."/>
            <person name="Baker S."/>
            <person name="Basham D."/>
            <person name="Bason N."/>
            <person name="Cherevach I."/>
            <person name="Chillingworth T."/>
            <person name="Collins M."/>
            <person name="Cronin A."/>
            <person name="Davis P."/>
            <person name="Doggett J."/>
            <person name="Feltwell T."/>
            <person name="Goble A."/>
            <person name="Hamlin N."/>
            <person name="Hauser H."/>
            <person name="Holroyd S."/>
            <person name="Jagels K."/>
            <person name="Leather S."/>
            <person name="Moule S."/>
            <person name="Norberczak H."/>
            <person name="O'Neil S."/>
            <person name="Ormond D."/>
            <person name="Price C."/>
            <person name="Rabbinowitsch E."/>
            <person name="Rutter S."/>
            <person name="Sanders M."/>
            <person name="Saunders D."/>
            <person name="Seeger K."/>
            <person name="Sharp S."/>
            <person name="Simmonds M."/>
            <person name="Skelton J."/>
            <person name="Squares R."/>
            <person name="Squares S."/>
            <person name="Stevens K."/>
            <person name="Unwin L."/>
            <person name="Whitehead S."/>
            <person name="Barrell B.G."/>
            <person name="Maskell D.J."/>
        </authorList>
    </citation>
    <scope>NUCLEOTIDE SEQUENCE [LARGE SCALE GENOMIC DNA]</scope>
    <source>
        <strain>Tohama I / ATCC BAA-589 / NCTC 13251</strain>
    </source>
</reference>
<reference key="4">
    <citation type="journal article" date="1995" name="J. Bacteriol.">
        <title>Synergistic binding of RNA polymerase and BvgA phosphate to the pertussis toxin promoter of Bordetella pertussis.</title>
        <authorList>
            <person name="Boucher P.E."/>
            <person name="Stibitz S."/>
        </authorList>
    </citation>
    <scope>REGULATION BY BVGS/BVGA</scope>
    <source>
        <strain>Tohama I / ATCC BAA-589 / NCTC 13251</strain>
    </source>
</reference>
<reference key="5">
    <citation type="journal article" date="1996" name="Infect. Immun.">
        <title>The pertussis toxin liberation genes of Bordetella pertussis are transcriptionally linked to the pertussis toxin operon.</title>
        <authorList>
            <person name="Ricci S."/>
            <person name="Rappuoli R."/>
            <person name="Scarlato V."/>
        </authorList>
    </citation>
    <scope>COTRANSCRIPTION WITH PTX</scope>
    <source>
        <strain>Wellcome 28</strain>
    </source>
</reference>
<reference key="6">
    <citation type="journal article" date="1999" name="FEMS Microbiol. Lett.">
        <title>Mutants in the ptlA-H genes of Bordetella pertussis are deficient for pertussis toxin secretion.</title>
        <authorList>
            <person name="Craig-Mylius K.A."/>
            <person name="Weiss A.A."/>
        </authorList>
    </citation>
    <scope>FUNCTION</scope>
    <source>
        <strain>Tohama I / BP338</strain>
    </source>
</reference>
<reference key="7">
    <citation type="journal article" date="2004" name="Infect. Immun.">
        <title>Analysis of subassemblies of pertussis toxin subunits in vivo and their interaction with the ptl transport apparatus.</title>
        <authorList>
            <person name="Burns D.L."/>
            <person name="Fiddner S."/>
            <person name="Cheung A.M."/>
            <person name="Verma A."/>
        </authorList>
    </citation>
    <scope>FUNCTION</scope>
    <source>
        <strain>Tohama I / BP338</strain>
    </source>
</reference>
<name>PTLA_BORPE</name>
<proteinExistence type="evidence at transcript level"/>
<feature type="signal peptide" evidence="1">
    <location>
        <begin position="1"/>
        <end position="33"/>
    </location>
</feature>
<feature type="chain" id="PRO_0000262572" description="Type IV secretion system protein PtlA">
    <location>
        <begin position="34"/>
        <end position="102"/>
    </location>
</feature>
<feature type="transmembrane region" description="Helical" evidence="1">
    <location>
        <begin position="47"/>
        <end position="67"/>
    </location>
</feature>
<feature type="transmembrane region" description="Helical" evidence="1">
    <location>
        <begin position="77"/>
        <end position="97"/>
    </location>
</feature>
<comment type="function">
    <text evidence="2 3 4">Component of the type IV secretion system ptl required for secretion of assembled pertussis toxin (PTX) through the outer membrane.</text>
</comment>
<comment type="subcellular location">
    <subcellularLocation>
        <location evidence="5">Cell membrane</location>
        <topology evidence="5">Multi-pass membrane protein</topology>
    </subcellularLocation>
</comment>
<comment type="induction">
    <text>Cotranscribed with ptxABCDE. Activated by the two-component regulatory system BvgS/BvgA.</text>
</comment>
<comment type="similarity">
    <text evidence="5">Belongs to the PtlA family.</text>
</comment>
<accession>Q45390</accession>
<protein>
    <recommendedName>
        <fullName>Type IV secretion system protein PtlA</fullName>
    </recommendedName>
    <alternativeName>
        <fullName>Pertussis toxin liberation protein A</fullName>
    </alternativeName>
</protein>
<evidence type="ECO:0000255" key="1"/>
<evidence type="ECO:0000269" key="2">
    <source>
    </source>
</evidence>
<evidence type="ECO:0000269" key="3">
    <source>
    </source>
</evidence>
<evidence type="ECO:0000269" key="4">
    <source>
    </source>
</evidence>
<evidence type="ECO:0000305" key="5"/>
<keyword id="KW-1003">Cell membrane</keyword>
<keyword id="KW-0472">Membrane</keyword>
<keyword id="KW-1185">Reference proteome</keyword>
<keyword id="KW-0732">Signal</keyword>
<keyword id="KW-0812">Transmembrane</keyword>
<keyword id="KW-1133">Transmembrane helix</keyword>
<keyword id="KW-0813">Transport</keyword>
<dbReference type="EMBL" id="M14378">
    <property type="protein sequence ID" value="AAA83985.1"/>
    <property type="molecule type" value="Genomic_DNA"/>
</dbReference>
<dbReference type="EMBL" id="L10720">
    <property type="status" value="NOT_ANNOTATED_CDS"/>
    <property type="molecule type" value="Genomic_DNA"/>
</dbReference>
<dbReference type="EMBL" id="BX640422">
    <property type="protein sequence ID" value="CAE44043.1"/>
    <property type="molecule type" value="Genomic_DNA"/>
</dbReference>
<dbReference type="RefSeq" id="NP_882287.1">
    <property type="nucleotide sequence ID" value="NC_002929.2"/>
</dbReference>
<dbReference type="RefSeq" id="WP_010929493.1">
    <property type="nucleotide sequence ID" value="NZ_CP039022.1"/>
</dbReference>
<dbReference type="STRING" id="257313.BP3788"/>
<dbReference type="TCDB" id="3.A.7.3.1">
    <property type="family name" value="the type iv (conjugal dna-protein transfer or virb) secretory pathway (ivsp) family"/>
</dbReference>
<dbReference type="PaxDb" id="257313-BP3788"/>
<dbReference type="GeneID" id="93206107"/>
<dbReference type="KEGG" id="bpe:BP3788"/>
<dbReference type="PATRIC" id="fig|257313.5.peg.4092"/>
<dbReference type="eggNOG" id="ENOG5033CNI">
    <property type="taxonomic scope" value="Bacteria"/>
</dbReference>
<dbReference type="HOGENOM" id="CLU_155084_1_1_4"/>
<dbReference type="Proteomes" id="UP000002676">
    <property type="component" value="Chromosome"/>
</dbReference>
<dbReference type="GO" id="GO:0005886">
    <property type="term" value="C:plasma membrane"/>
    <property type="evidence" value="ECO:0007669"/>
    <property type="project" value="UniProtKB-SubCell"/>
</dbReference>
<dbReference type="InterPro" id="IPR007039">
    <property type="entry name" value="TrbC/VirB2"/>
</dbReference>
<dbReference type="Pfam" id="PF04956">
    <property type="entry name" value="TrbC"/>
    <property type="match status" value="1"/>
</dbReference>
<sequence>MNPLKDLRASLPRLAFMAACTLLSATLPDLAQAGGGLQRVNHFMASIVVVLRGASVATVTIAIIWAGYKLLFRHADVLDVVRVVLAGLLIGASAEIARYLLT</sequence>
<organism>
    <name type="scientific">Bordetella pertussis (strain Tohama I / ATCC BAA-589 / NCTC 13251)</name>
    <dbReference type="NCBI Taxonomy" id="257313"/>
    <lineage>
        <taxon>Bacteria</taxon>
        <taxon>Pseudomonadati</taxon>
        <taxon>Pseudomonadota</taxon>
        <taxon>Betaproteobacteria</taxon>
        <taxon>Burkholderiales</taxon>
        <taxon>Alcaligenaceae</taxon>
        <taxon>Bordetella</taxon>
    </lineage>
</organism>
<gene>
    <name type="primary">ptlA</name>
    <name type="ordered locus">BP3788</name>
</gene>